<proteinExistence type="inferred from homology"/>
<keyword id="KW-0028">Amino-acid biosynthesis</keyword>
<keyword id="KW-0067">ATP-binding</keyword>
<keyword id="KW-0963">Cytoplasm</keyword>
<keyword id="KW-0418">Kinase</keyword>
<keyword id="KW-0547">Nucleotide-binding</keyword>
<keyword id="KW-0641">Proline biosynthesis</keyword>
<keyword id="KW-1185">Reference proteome</keyword>
<keyword id="KW-0808">Transferase</keyword>
<feature type="chain" id="PRO_0000230050" description="Glutamate 5-kinase">
    <location>
        <begin position="1"/>
        <end position="372"/>
    </location>
</feature>
<feature type="domain" description="PUA" evidence="1">
    <location>
        <begin position="280"/>
        <end position="358"/>
    </location>
</feature>
<feature type="binding site" evidence="1">
    <location>
        <position position="14"/>
    </location>
    <ligand>
        <name>ATP</name>
        <dbReference type="ChEBI" id="CHEBI:30616"/>
    </ligand>
</feature>
<feature type="binding site" evidence="1">
    <location>
        <position position="54"/>
    </location>
    <ligand>
        <name>substrate</name>
    </ligand>
</feature>
<feature type="binding site" evidence="1">
    <location>
        <position position="141"/>
    </location>
    <ligand>
        <name>substrate</name>
    </ligand>
</feature>
<feature type="binding site" evidence="1">
    <location>
        <position position="153"/>
    </location>
    <ligand>
        <name>substrate</name>
    </ligand>
</feature>
<feature type="binding site" evidence="1">
    <location>
        <begin position="173"/>
        <end position="174"/>
    </location>
    <ligand>
        <name>ATP</name>
        <dbReference type="ChEBI" id="CHEBI:30616"/>
    </ligand>
</feature>
<accession>Q2Y7Y3</accession>
<sequence>MESVLKQSRRIVVKVGSSLVTNQGQGLDHSALAHWAGQIVKLKKTGKEVVLVSSGAIAEGMQRLKWKKRPHAVHELQAAAAVGQMGLVQAYETCFRKHELHSAQILLTHEDLSDRKRYLNARSTLATLLDLNVIPIINENDTVATDEIRFGDNDTLAALVTNLIEADVLVILTDQRGLFTADPRKDTQAKLVEQAKAGDADIERMAGGAGSEIGRGGMLTKVLAAKRAARSGAHTVIASGREADVLIRLARGEAIGTQLLAETMTLAARKQWLADHLQIRGNVTLDEGAVEALAVGGKSLLPVGVTDVRGNFERGEVVGCLDPHGREIARGLVNYNAAETRRILRRASDEIESLLGYIGEPELIHRDNLVLL</sequence>
<gene>
    <name evidence="1" type="primary">proB</name>
    <name type="ordered locus">Nmul_A1843</name>
</gene>
<evidence type="ECO:0000255" key="1">
    <source>
        <dbReference type="HAMAP-Rule" id="MF_00456"/>
    </source>
</evidence>
<dbReference type="EC" id="2.7.2.11" evidence="1"/>
<dbReference type="EMBL" id="CP000103">
    <property type="protein sequence ID" value="ABB75138.1"/>
    <property type="molecule type" value="Genomic_DNA"/>
</dbReference>
<dbReference type="RefSeq" id="WP_011381158.1">
    <property type="nucleotide sequence ID" value="NC_007614.1"/>
</dbReference>
<dbReference type="SMR" id="Q2Y7Y3"/>
<dbReference type="STRING" id="323848.Nmul_A1843"/>
<dbReference type="KEGG" id="nmu:Nmul_A1843"/>
<dbReference type="eggNOG" id="COG0263">
    <property type="taxonomic scope" value="Bacteria"/>
</dbReference>
<dbReference type="HOGENOM" id="CLU_025400_2_0_4"/>
<dbReference type="OrthoDB" id="9804434at2"/>
<dbReference type="UniPathway" id="UPA00098">
    <property type="reaction ID" value="UER00359"/>
</dbReference>
<dbReference type="Proteomes" id="UP000002718">
    <property type="component" value="Chromosome"/>
</dbReference>
<dbReference type="GO" id="GO:0005829">
    <property type="term" value="C:cytosol"/>
    <property type="evidence" value="ECO:0007669"/>
    <property type="project" value="TreeGrafter"/>
</dbReference>
<dbReference type="GO" id="GO:0005524">
    <property type="term" value="F:ATP binding"/>
    <property type="evidence" value="ECO:0007669"/>
    <property type="project" value="UniProtKB-KW"/>
</dbReference>
<dbReference type="GO" id="GO:0004349">
    <property type="term" value="F:glutamate 5-kinase activity"/>
    <property type="evidence" value="ECO:0007669"/>
    <property type="project" value="UniProtKB-UniRule"/>
</dbReference>
<dbReference type="GO" id="GO:0003723">
    <property type="term" value="F:RNA binding"/>
    <property type="evidence" value="ECO:0007669"/>
    <property type="project" value="InterPro"/>
</dbReference>
<dbReference type="GO" id="GO:0055129">
    <property type="term" value="P:L-proline biosynthetic process"/>
    <property type="evidence" value="ECO:0007669"/>
    <property type="project" value="UniProtKB-UniRule"/>
</dbReference>
<dbReference type="CDD" id="cd04242">
    <property type="entry name" value="AAK_G5K_ProB"/>
    <property type="match status" value="1"/>
</dbReference>
<dbReference type="CDD" id="cd21157">
    <property type="entry name" value="PUA_G5K"/>
    <property type="match status" value="1"/>
</dbReference>
<dbReference type="FunFam" id="2.30.130.10:FF:000007">
    <property type="entry name" value="Glutamate 5-kinase"/>
    <property type="match status" value="1"/>
</dbReference>
<dbReference type="FunFam" id="3.40.1160.10:FF:000018">
    <property type="entry name" value="Glutamate 5-kinase"/>
    <property type="match status" value="1"/>
</dbReference>
<dbReference type="Gene3D" id="3.40.1160.10">
    <property type="entry name" value="Acetylglutamate kinase-like"/>
    <property type="match status" value="2"/>
</dbReference>
<dbReference type="Gene3D" id="2.30.130.10">
    <property type="entry name" value="PUA domain"/>
    <property type="match status" value="1"/>
</dbReference>
<dbReference type="HAMAP" id="MF_00456">
    <property type="entry name" value="ProB"/>
    <property type="match status" value="1"/>
</dbReference>
<dbReference type="InterPro" id="IPR036393">
    <property type="entry name" value="AceGlu_kinase-like_sf"/>
</dbReference>
<dbReference type="InterPro" id="IPR001048">
    <property type="entry name" value="Asp/Glu/Uridylate_kinase"/>
</dbReference>
<dbReference type="InterPro" id="IPR041739">
    <property type="entry name" value="G5K_ProB"/>
</dbReference>
<dbReference type="InterPro" id="IPR001057">
    <property type="entry name" value="Glu/AcGlu_kinase"/>
</dbReference>
<dbReference type="InterPro" id="IPR011529">
    <property type="entry name" value="Glu_5kinase"/>
</dbReference>
<dbReference type="InterPro" id="IPR005715">
    <property type="entry name" value="Glu_5kinase/COase_Synthase"/>
</dbReference>
<dbReference type="InterPro" id="IPR019797">
    <property type="entry name" value="Glutamate_5-kinase_CS"/>
</dbReference>
<dbReference type="InterPro" id="IPR002478">
    <property type="entry name" value="PUA"/>
</dbReference>
<dbReference type="InterPro" id="IPR015947">
    <property type="entry name" value="PUA-like_sf"/>
</dbReference>
<dbReference type="InterPro" id="IPR036974">
    <property type="entry name" value="PUA_sf"/>
</dbReference>
<dbReference type="NCBIfam" id="TIGR01027">
    <property type="entry name" value="proB"/>
    <property type="match status" value="1"/>
</dbReference>
<dbReference type="PANTHER" id="PTHR43654">
    <property type="entry name" value="GLUTAMATE 5-KINASE"/>
    <property type="match status" value="1"/>
</dbReference>
<dbReference type="PANTHER" id="PTHR43654:SF1">
    <property type="entry name" value="ISOPENTENYL PHOSPHATE KINASE"/>
    <property type="match status" value="1"/>
</dbReference>
<dbReference type="Pfam" id="PF00696">
    <property type="entry name" value="AA_kinase"/>
    <property type="match status" value="1"/>
</dbReference>
<dbReference type="Pfam" id="PF01472">
    <property type="entry name" value="PUA"/>
    <property type="match status" value="1"/>
</dbReference>
<dbReference type="PIRSF" id="PIRSF000729">
    <property type="entry name" value="GK"/>
    <property type="match status" value="1"/>
</dbReference>
<dbReference type="PRINTS" id="PR00474">
    <property type="entry name" value="GLU5KINASE"/>
</dbReference>
<dbReference type="SMART" id="SM00359">
    <property type="entry name" value="PUA"/>
    <property type="match status" value="1"/>
</dbReference>
<dbReference type="SUPFAM" id="SSF53633">
    <property type="entry name" value="Carbamate kinase-like"/>
    <property type="match status" value="1"/>
</dbReference>
<dbReference type="SUPFAM" id="SSF88697">
    <property type="entry name" value="PUA domain-like"/>
    <property type="match status" value="1"/>
</dbReference>
<dbReference type="PROSITE" id="PS00902">
    <property type="entry name" value="GLUTAMATE_5_KINASE"/>
    <property type="match status" value="1"/>
</dbReference>
<dbReference type="PROSITE" id="PS50890">
    <property type="entry name" value="PUA"/>
    <property type="match status" value="1"/>
</dbReference>
<name>PROB_NITMU</name>
<reference key="1">
    <citation type="submission" date="2005-08" db="EMBL/GenBank/DDBJ databases">
        <title>Complete sequence of chromosome 1 of Nitrosospira multiformis ATCC 25196.</title>
        <authorList>
            <person name="Copeland A."/>
            <person name="Lucas S."/>
            <person name="Lapidus A."/>
            <person name="Barry K."/>
            <person name="Detter J.C."/>
            <person name="Glavina T."/>
            <person name="Hammon N."/>
            <person name="Israni S."/>
            <person name="Pitluck S."/>
            <person name="Chain P."/>
            <person name="Malfatti S."/>
            <person name="Shin M."/>
            <person name="Vergez L."/>
            <person name="Schmutz J."/>
            <person name="Larimer F."/>
            <person name="Land M."/>
            <person name="Hauser L."/>
            <person name="Kyrpides N."/>
            <person name="Lykidis A."/>
            <person name="Richardson P."/>
        </authorList>
    </citation>
    <scope>NUCLEOTIDE SEQUENCE [LARGE SCALE GENOMIC DNA]</scope>
    <source>
        <strain>ATCC 25196 / NCIMB 11849 / C 71</strain>
    </source>
</reference>
<protein>
    <recommendedName>
        <fullName evidence="1">Glutamate 5-kinase</fullName>
        <ecNumber evidence="1">2.7.2.11</ecNumber>
    </recommendedName>
    <alternativeName>
        <fullName evidence="1">Gamma-glutamyl kinase</fullName>
        <shortName evidence="1">GK</shortName>
    </alternativeName>
</protein>
<comment type="function">
    <text evidence="1">Catalyzes the transfer of a phosphate group to glutamate to form L-glutamate 5-phosphate.</text>
</comment>
<comment type="catalytic activity">
    <reaction evidence="1">
        <text>L-glutamate + ATP = L-glutamyl 5-phosphate + ADP</text>
        <dbReference type="Rhea" id="RHEA:14877"/>
        <dbReference type="ChEBI" id="CHEBI:29985"/>
        <dbReference type="ChEBI" id="CHEBI:30616"/>
        <dbReference type="ChEBI" id="CHEBI:58274"/>
        <dbReference type="ChEBI" id="CHEBI:456216"/>
        <dbReference type="EC" id="2.7.2.11"/>
    </reaction>
</comment>
<comment type="pathway">
    <text evidence="1">Amino-acid biosynthesis; L-proline biosynthesis; L-glutamate 5-semialdehyde from L-glutamate: step 1/2.</text>
</comment>
<comment type="subcellular location">
    <subcellularLocation>
        <location evidence="1">Cytoplasm</location>
    </subcellularLocation>
</comment>
<comment type="similarity">
    <text evidence="1">Belongs to the glutamate 5-kinase family.</text>
</comment>
<organism>
    <name type="scientific">Nitrosospira multiformis (strain ATCC 25196 / NCIMB 11849 / C 71)</name>
    <dbReference type="NCBI Taxonomy" id="323848"/>
    <lineage>
        <taxon>Bacteria</taxon>
        <taxon>Pseudomonadati</taxon>
        <taxon>Pseudomonadota</taxon>
        <taxon>Betaproteobacteria</taxon>
        <taxon>Nitrosomonadales</taxon>
        <taxon>Nitrosomonadaceae</taxon>
        <taxon>Nitrosospira</taxon>
    </lineage>
</organism>